<proteinExistence type="inferred from homology"/>
<name>FIXX_ECOL6</name>
<organism>
    <name type="scientific">Escherichia coli O6:H1 (strain CFT073 / ATCC 700928 / UPEC)</name>
    <dbReference type="NCBI Taxonomy" id="199310"/>
    <lineage>
        <taxon>Bacteria</taxon>
        <taxon>Pseudomonadati</taxon>
        <taxon>Pseudomonadota</taxon>
        <taxon>Gammaproteobacteria</taxon>
        <taxon>Enterobacterales</taxon>
        <taxon>Enterobacteriaceae</taxon>
        <taxon>Escherichia</taxon>
    </lineage>
</organism>
<comment type="function">
    <text evidence="1">Could be part of an electron transfer system required for anaerobic carnitine reduction. Could be a 3Fe-4S cluster-containing protein (By similarity).</text>
</comment>
<comment type="similarity">
    <text evidence="2">Belongs to the bacterial-type ferredoxin family. FixX subfamily.</text>
</comment>
<keyword id="KW-0004">4Fe-4S</keyword>
<keyword id="KW-0249">Electron transport</keyword>
<keyword id="KW-0408">Iron</keyword>
<keyword id="KW-0411">Iron-sulfur</keyword>
<keyword id="KW-0479">Metal-binding</keyword>
<keyword id="KW-1185">Reference proteome</keyword>
<keyword id="KW-0813">Transport</keyword>
<reference key="1">
    <citation type="journal article" date="2002" name="Proc. Natl. Acad. Sci. U.S.A.">
        <title>Extensive mosaic structure revealed by the complete genome sequence of uropathogenic Escherichia coli.</title>
        <authorList>
            <person name="Welch R.A."/>
            <person name="Burland V."/>
            <person name="Plunkett G. III"/>
            <person name="Redford P."/>
            <person name="Roesch P."/>
            <person name="Rasko D."/>
            <person name="Buckles E.L."/>
            <person name="Liou S.-R."/>
            <person name="Boutin A."/>
            <person name="Hackett J."/>
            <person name="Stroud D."/>
            <person name="Mayhew G.F."/>
            <person name="Rose D.J."/>
            <person name="Zhou S."/>
            <person name="Schwartz D.C."/>
            <person name="Perna N.T."/>
            <person name="Mobley H.L.T."/>
            <person name="Donnenberg M.S."/>
            <person name="Blattner F.R."/>
        </authorList>
    </citation>
    <scope>NUCLEOTIDE SEQUENCE [LARGE SCALE GENOMIC DNA]</scope>
    <source>
        <strain>CFT073 / ATCC 700928 / UPEC</strain>
    </source>
</reference>
<gene>
    <name type="primary">fixX</name>
    <name type="ordered locus">c0054</name>
</gene>
<sequence length="95" mass="10479">MTSPVNVDVKLGVNKFNVDEEHPHIVVKADADKQALELLVKACPAGLYKKQDDGSVRFDYAGCLECGTCRILGLGSALEQWEYPRGTFGVEFRYG</sequence>
<feature type="chain" id="PRO_0000159213" description="Ferredoxin-like protein FixX">
    <location>
        <begin position="1"/>
        <end position="95"/>
    </location>
</feature>
<dbReference type="EMBL" id="AE014075">
    <property type="protein sequence ID" value="AAN78550.1"/>
    <property type="molecule type" value="Genomic_DNA"/>
</dbReference>
<dbReference type="RefSeq" id="WP_000203741.1">
    <property type="nucleotide sequence ID" value="NZ_CP051263.1"/>
</dbReference>
<dbReference type="SMR" id="P68647"/>
<dbReference type="STRING" id="199310.c0054"/>
<dbReference type="GeneID" id="93777391"/>
<dbReference type="KEGG" id="ecc:c0054"/>
<dbReference type="eggNOG" id="COG2440">
    <property type="taxonomic scope" value="Bacteria"/>
</dbReference>
<dbReference type="HOGENOM" id="CLU_163428_1_0_6"/>
<dbReference type="BioCyc" id="ECOL199310:C0054-MONOMER"/>
<dbReference type="Proteomes" id="UP000001410">
    <property type="component" value="Chromosome"/>
</dbReference>
<dbReference type="GO" id="GO:0051539">
    <property type="term" value="F:4 iron, 4 sulfur cluster binding"/>
    <property type="evidence" value="ECO:0007669"/>
    <property type="project" value="UniProtKB-KW"/>
</dbReference>
<dbReference type="GO" id="GO:0005506">
    <property type="term" value="F:iron ion binding"/>
    <property type="evidence" value="ECO:0007669"/>
    <property type="project" value="InterPro"/>
</dbReference>
<dbReference type="Gene3D" id="3.30.70.20">
    <property type="match status" value="1"/>
</dbReference>
<dbReference type="InterPro" id="IPR012206">
    <property type="entry name" value="Fd_FixX"/>
</dbReference>
<dbReference type="NCBIfam" id="NF011993">
    <property type="entry name" value="PRK15449.1"/>
    <property type="match status" value="1"/>
</dbReference>
<dbReference type="PANTHER" id="PTHR43082">
    <property type="entry name" value="FERREDOXIN-LIKE"/>
    <property type="match status" value="1"/>
</dbReference>
<dbReference type="PANTHER" id="PTHR43082:SF1">
    <property type="entry name" value="FERREDOXIN-LIKE PROTEIN FIXX-RELATED"/>
    <property type="match status" value="1"/>
</dbReference>
<dbReference type="PIRSF" id="PIRSF036548">
    <property type="entry name" value="Fdx_FixX"/>
    <property type="match status" value="1"/>
</dbReference>
<dbReference type="SUPFAM" id="SSF54862">
    <property type="entry name" value="4Fe-4S ferredoxins"/>
    <property type="match status" value="1"/>
</dbReference>
<evidence type="ECO:0000250" key="1"/>
<evidence type="ECO:0000305" key="2"/>
<accession>P68647</accession>
<accession>P31576</accession>
<accession>P75627</accession>
<protein>
    <recommendedName>
        <fullName>Ferredoxin-like protein FixX</fullName>
    </recommendedName>
</protein>